<keyword id="KW-0221">Differentiation</keyword>
<keyword id="KW-0265">Erythrocyte maturation</keyword>
<keyword id="KW-0472">Membrane</keyword>
<keyword id="KW-0496">Mitochondrion</keyword>
<keyword id="KW-1000">Mitochondrion outer membrane</keyword>
<keyword id="KW-1267">Proteomics identification</keyword>
<keyword id="KW-1185">Reference proteome</keyword>
<keyword id="KW-0809">Transit peptide</keyword>
<keyword id="KW-0812">Transmembrane</keyword>
<keyword id="KW-1133">Transmembrane helix</keyword>
<keyword id="KW-0043">Tumor suppressor</keyword>
<name>F210B_HUMAN</name>
<proteinExistence type="evidence at protein level"/>
<organism>
    <name type="scientific">Homo sapiens</name>
    <name type="common">Human</name>
    <dbReference type="NCBI Taxonomy" id="9606"/>
    <lineage>
        <taxon>Eukaryota</taxon>
        <taxon>Metazoa</taxon>
        <taxon>Chordata</taxon>
        <taxon>Craniata</taxon>
        <taxon>Vertebrata</taxon>
        <taxon>Euteleostomi</taxon>
        <taxon>Mammalia</taxon>
        <taxon>Eutheria</taxon>
        <taxon>Euarchontoglires</taxon>
        <taxon>Primates</taxon>
        <taxon>Haplorrhini</taxon>
        <taxon>Catarrhini</taxon>
        <taxon>Hominidae</taxon>
        <taxon>Homo</taxon>
    </lineage>
</organism>
<evidence type="ECO:0000255" key="1"/>
<evidence type="ECO:0000256" key="2">
    <source>
        <dbReference type="SAM" id="MobiDB-lite"/>
    </source>
</evidence>
<evidence type="ECO:0000269" key="3">
    <source>
    </source>
</evidence>
<evidence type="ECO:0000269" key="4">
    <source>
    </source>
</evidence>
<evidence type="ECO:0000305" key="5"/>
<evidence type="ECO:0000312" key="6">
    <source>
        <dbReference type="HGNC" id="HGNC:16102"/>
    </source>
</evidence>
<accession>Q96KR6</accession>
<accession>B2RBQ9</accession>
<accession>E1P5Y7</accession>
<accession>Q8WVN2</accession>
<accession>Q9BYL6</accession>
<accession>Q9H418</accession>
<comment type="function">
    <text evidence="3 4">Plays a role in erythroid differentiation (PubMed:26968549). Involved in cell proliferation and tumor cell growth suppression (PubMed:28594398). Involved in the metabolic reprogramming of cancer cells in a PDK4-dependent manner (PubMed:28594398).</text>
</comment>
<comment type="interaction">
    <interactant intactId="EBI-18938272">
        <id>Q96KR6</id>
    </interactant>
    <interactant intactId="EBI-3904417">
        <id>Q99437</id>
        <label>ATP6V0B</label>
    </interactant>
    <organismsDiffer>false</organismsDiffer>
    <experiments>3</experiments>
</comment>
<comment type="interaction">
    <interactant intactId="EBI-18938272">
        <id>Q96KR6</id>
    </interactant>
    <interactant intactId="EBI-721179">
        <id>P27449</id>
        <label>ATP6V0C</label>
    </interactant>
    <organismsDiffer>false</organismsDiffer>
    <experiments>3</experiments>
</comment>
<comment type="interaction">
    <interactant intactId="EBI-18938272">
        <id>Q96KR6</id>
    </interactant>
    <interactant intactId="EBI-747430">
        <id>Q9BXK5</id>
        <label>BCL2L13</label>
    </interactant>
    <organismsDiffer>false</organismsDiffer>
    <experiments>3</experiments>
</comment>
<comment type="interaction">
    <interactant intactId="EBI-18938272">
        <id>Q96KR6</id>
    </interactant>
    <interactant intactId="EBI-749204">
        <id>O15155</id>
        <label>BET1</label>
    </interactant>
    <organismsDiffer>false</organismsDiffer>
    <experiments>3</experiments>
</comment>
<comment type="interaction">
    <interactant intactId="EBI-18938272">
        <id>Q96KR6</id>
    </interactant>
    <interactant intactId="EBI-11986083">
        <id>Q6UWT4</id>
        <label>C5orf46</label>
    </interactant>
    <organismsDiffer>false</organismsDiffer>
    <experiments>3</experiments>
</comment>
<comment type="interaction">
    <interactant intactId="EBI-18938272">
        <id>Q96KR6</id>
    </interactant>
    <interactant intactId="EBI-9083477">
        <id>Q9P0B6</id>
        <label>CCDC167</label>
    </interactant>
    <organismsDiffer>false</organismsDiffer>
    <experiments>3</experiments>
</comment>
<comment type="interaction">
    <interactant intactId="EBI-18938272">
        <id>Q96KR6</id>
    </interactant>
    <interactant intactId="EBI-3915344">
        <id>Q08708</id>
        <label>CD300C</label>
    </interactant>
    <organismsDiffer>false</organismsDiffer>
    <experiments>3</experiments>
</comment>
<comment type="interaction">
    <interactant intactId="EBI-18938272">
        <id>Q96KR6</id>
    </interactant>
    <interactant intactId="EBI-11959453">
        <id>Q8NHS1</id>
        <label>CLDND2</label>
    </interactant>
    <organismsDiffer>false</organismsDiffer>
    <experiments>3</experiments>
</comment>
<comment type="interaction">
    <interactant intactId="EBI-18938272">
        <id>Q96KR6</id>
    </interactant>
    <interactant intactId="EBI-12208021">
        <id>Q8TBE1</id>
        <label>CNIH3</label>
    </interactant>
    <organismsDiffer>false</organismsDiffer>
    <experiments>3</experiments>
</comment>
<comment type="interaction">
    <interactant intactId="EBI-18938272">
        <id>Q96KR6</id>
    </interactant>
    <interactant intactId="EBI-1058710">
        <id>O43169</id>
        <label>CYB5B</label>
    </interactant>
    <organismsDiffer>false</organismsDiffer>
    <experiments>3</experiments>
</comment>
<comment type="interaction">
    <interactant intactId="EBI-18938272">
        <id>Q96KR6</id>
    </interactant>
    <interactant intactId="EBI-1046040">
        <id>P00387</id>
        <label>CYB5R3</label>
    </interactant>
    <organismsDiffer>false</organismsDiffer>
    <experiments>3</experiments>
</comment>
<comment type="interaction">
    <interactant intactId="EBI-18938272">
        <id>Q96KR6</id>
    </interactant>
    <interactant intactId="EBI-1752413">
        <id>P78329</id>
        <label>CYP4F2</label>
    </interactant>
    <organismsDiffer>false</organismsDiffer>
    <experiments>3</experiments>
</comment>
<comment type="interaction">
    <interactant intactId="EBI-18938272">
        <id>Q96KR6</id>
    </interactant>
    <interactant intactId="EBI-3907816">
        <id>P54852</id>
        <label>EMP3</label>
    </interactant>
    <organismsDiffer>false</organismsDiffer>
    <experiments>3</experiments>
</comment>
<comment type="interaction">
    <interactant intactId="EBI-18938272">
        <id>Q96KR6</id>
    </interactant>
    <interactant intactId="EBI-3385283">
        <id>Q9Y3D6</id>
        <label>FIS1</label>
    </interactant>
    <organismsDiffer>false</organismsDiffer>
    <experiments>3</experiments>
</comment>
<comment type="interaction">
    <interactant intactId="EBI-18938272">
        <id>Q96KR6</id>
    </interactant>
    <interactant intactId="EBI-6166686">
        <id>Q96F15</id>
        <label>GIMAP5</label>
    </interactant>
    <organismsDiffer>false</organismsDiffer>
    <experiments>3</experiments>
</comment>
<comment type="interaction">
    <interactant intactId="EBI-18938272">
        <id>Q96KR6</id>
    </interactant>
    <interactant intactId="EBI-7133736">
        <id>P07686</id>
        <label>HEXB</label>
    </interactant>
    <organismsDiffer>false</organismsDiffer>
    <experiments>3</experiments>
</comment>
<comment type="interaction">
    <interactant intactId="EBI-18938272">
        <id>Q96KR6</id>
    </interactant>
    <interactant intactId="EBI-2806151">
        <id>P09601</id>
        <label>HMOX1</label>
    </interactant>
    <organismsDiffer>false</organismsDiffer>
    <experiments>3</experiments>
</comment>
<comment type="interaction">
    <interactant intactId="EBI-18938272">
        <id>Q96KR6</id>
    </interactant>
    <interactant intactId="EBI-712096">
        <id>P30519</id>
        <label>HMOX2</label>
    </interactant>
    <organismsDiffer>false</organismsDiffer>
    <experiments>3</experiments>
</comment>
<comment type="interaction">
    <interactant intactId="EBI-18938272">
        <id>Q96KR6</id>
    </interactant>
    <interactant intactId="EBI-725665">
        <id>Q9Y5U9</id>
        <label>IER3IP1</label>
    </interactant>
    <organismsDiffer>false</organismsDiffer>
    <experiments>3</experiments>
</comment>
<comment type="interaction">
    <interactant intactId="EBI-18938272">
        <id>Q96KR6</id>
    </interactant>
    <interactant intactId="EBI-7932862">
        <id>Q01628</id>
        <label>IFITM3</label>
    </interactant>
    <organismsDiffer>false</organismsDiffer>
    <experiments>3</experiments>
</comment>
<comment type="interaction">
    <interactant intactId="EBI-18938272">
        <id>Q96KR6</id>
    </interactant>
    <interactant intactId="EBI-12133176">
        <id>Q9UIQ6-2</id>
        <label>LNPEP</label>
    </interactant>
    <organismsDiffer>false</organismsDiffer>
    <experiments>3</experiments>
</comment>
<comment type="interaction">
    <interactant intactId="EBI-18938272">
        <id>Q96KR6</id>
    </interactant>
    <interactant intactId="EBI-12033434">
        <id>Q9UBY5</id>
        <label>LPAR3</label>
    </interactant>
    <organismsDiffer>false</organismsDiffer>
    <experiments>3</experiments>
</comment>
<comment type="interaction">
    <interactant intactId="EBI-18938272">
        <id>Q96KR6</id>
    </interactant>
    <interactant intactId="EBI-11956541">
        <id>Q9GZY8-5</id>
        <label>MFF</label>
    </interactant>
    <organismsDiffer>false</organismsDiffer>
    <experiments>3</experiments>
</comment>
<comment type="interaction">
    <interactant intactId="EBI-18938272">
        <id>Q96KR6</id>
    </interactant>
    <interactant intactId="EBI-12070086">
        <id>Q5J8X5</id>
        <label>MS4A13</label>
    </interactant>
    <organismsDiffer>false</organismsDiffer>
    <experiments>3</experiments>
</comment>
<comment type="interaction">
    <interactant intactId="EBI-18938272">
        <id>Q96KR6</id>
    </interactant>
    <interactant intactId="EBI-10317425">
        <id>Q9NZG7</id>
        <label>NINJ2</label>
    </interactant>
    <organismsDiffer>false</organismsDiffer>
    <experiments>3</experiments>
</comment>
<comment type="interaction">
    <interactant intactId="EBI-18938272">
        <id>Q96KR6</id>
    </interactant>
    <interactant intactId="EBI-3919611">
        <id>Q16617</id>
        <label>NKG7</label>
    </interactant>
    <organismsDiffer>false</organismsDiffer>
    <experiments>3</experiments>
</comment>
<comment type="interaction">
    <interactant intactId="EBI-18938272">
        <id>Q96KR6</id>
    </interactant>
    <interactant intactId="EBI-11075081">
        <id>Q53FV1</id>
        <label>ORMDL2</label>
    </interactant>
    <organismsDiffer>false</organismsDiffer>
    <experiments>3</experiments>
</comment>
<comment type="interaction">
    <interactant intactId="EBI-18938272">
        <id>Q96KR6</id>
    </interactant>
    <interactant intactId="EBI-12853910">
        <id>Q7RTS5</id>
        <label>OTOP3</label>
    </interactant>
    <organismsDiffer>false</organismsDiffer>
    <experiments>3</experiments>
</comment>
<comment type="interaction">
    <interactant intactId="EBI-18938272">
        <id>Q96KR6</id>
    </interactant>
    <interactant intactId="EBI-608347">
        <id>Q04941</id>
        <label>PLP2</label>
    </interactant>
    <organismsDiffer>false</organismsDiffer>
    <experiments>3</experiments>
</comment>
<comment type="interaction">
    <interactant intactId="EBI-18938272">
        <id>Q96KR6</id>
    </interactant>
    <interactant intactId="EBI-11721828">
        <id>Q8IY26</id>
        <label>PLPP6</label>
    </interactant>
    <organismsDiffer>false</organismsDiffer>
    <experiments>3</experiments>
</comment>
<comment type="interaction">
    <interactant intactId="EBI-18938272">
        <id>Q96KR6</id>
    </interactant>
    <interactant intactId="EBI-1052363">
        <id>Q9NS64</id>
        <label>RPRM</label>
    </interactant>
    <organismsDiffer>false</organismsDiffer>
    <experiments>3</experiments>
</comment>
<comment type="interaction">
    <interactant intactId="EBI-18938272">
        <id>Q96KR6</id>
    </interactant>
    <interactant intactId="EBI-10244780">
        <id>Q5QGT7</id>
        <label>RTP2</label>
    </interactant>
    <organismsDiffer>false</organismsDiffer>
    <experiments>3</experiments>
</comment>
<comment type="interaction">
    <interactant intactId="EBI-18938272">
        <id>Q96KR6</id>
    </interactant>
    <interactant intactId="EBI-10329948">
        <id>Q9Y6X1</id>
        <label>SERP1</label>
    </interactant>
    <organismsDiffer>false</organismsDiffer>
    <experiments>3</experiments>
</comment>
<comment type="interaction">
    <interactant intactId="EBI-18938272">
        <id>Q96KR6</id>
    </interactant>
    <interactant intactId="EBI-749270">
        <id>Q8N6R1</id>
        <label>SERP2</label>
    </interactant>
    <organismsDiffer>false</organismsDiffer>
    <experiments>3</experiments>
</comment>
<comment type="interaction">
    <interactant intactId="EBI-18938272">
        <id>Q96KR6</id>
    </interactant>
    <interactant intactId="EBI-12243266">
        <id>Q7RTY0</id>
        <label>SLC16A13</label>
    </interactant>
    <organismsDiffer>false</organismsDiffer>
    <experiments>3</experiments>
</comment>
<comment type="interaction">
    <interactant intactId="EBI-18938272">
        <id>Q96KR6</id>
    </interactant>
    <interactant intactId="EBI-10262251">
        <id>Q8IWU4</id>
        <label>SLC30A8</label>
    </interactant>
    <organismsDiffer>false</organismsDiffer>
    <experiments>3</experiments>
</comment>
<comment type="interaction">
    <interactant intactId="EBI-18938272">
        <id>Q96KR6</id>
    </interactant>
    <interactant intactId="EBI-10281213">
        <id>Q969S0</id>
        <label>SLC35B4</label>
    </interactant>
    <organismsDiffer>false</organismsDiffer>
    <experiments>3</experiments>
</comment>
<comment type="interaction">
    <interactant intactId="EBI-18938272">
        <id>Q96KR6</id>
    </interactant>
    <interactant intactId="EBI-13311257">
        <id>Q2M3R5</id>
        <label>SLC35G1</label>
    </interactant>
    <organismsDiffer>false</organismsDiffer>
    <experiments>3</experiments>
</comment>
<comment type="interaction">
    <interactant intactId="EBI-18938272">
        <id>Q96KR6</id>
    </interactant>
    <interactant intactId="EBI-8640191">
        <id>Q9NRQ5</id>
        <label>SMCO4</label>
    </interactant>
    <organismsDiffer>false</organismsDiffer>
    <experiments>3</experiments>
</comment>
<comment type="interaction">
    <interactant intactId="EBI-18938272">
        <id>Q96KR6</id>
    </interactant>
    <interactant intactId="EBI-12188413">
        <id>B2RUZ4</id>
        <label>SMIM1</label>
    </interactant>
    <organismsDiffer>false</organismsDiffer>
    <experiments>3</experiments>
</comment>
<comment type="interaction">
    <interactant intactId="EBI-18938272">
        <id>Q96KR6</id>
    </interactant>
    <interactant intactId="EBI-2695795">
        <id>O43752</id>
        <label>STX6</label>
    </interactant>
    <organismsDiffer>false</organismsDiffer>
    <experiments>3</experiments>
</comment>
<comment type="interaction">
    <interactant intactId="EBI-18938272">
        <id>Q96KR6</id>
    </interactant>
    <interactant intactId="EBI-3221827">
        <id>O15400</id>
        <label>STX7</label>
    </interactant>
    <organismsDiffer>false</organismsDiffer>
    <experiments>3</experiments>
</comment>
<comment type="interaction">
    <interactant intactId="EBI-18938272">
        <id>Q96KR6</id>
    </interactant>
    <interactant intactId="EBI-1049004">
        <id>P57105</id>
        <label>SYNJ2BP</label>
    </interactant>
    <organismsDiffer>false</organismsDiffer>
    <experiments>3</experiments>
</comment>
<comment type="interaction">
    <interactant intactId="EBI-18938272">
        <id>Q96KR6</id>
    </interactant>
    <interactant intactId="EBI-714319">
        <id>P02787</id>
        <label>TF</label>
    </interactant>
    <organismsDiffer>false</organismsDiffer>
    <experiments>3</experiments>
</comment>
<comment type="interaction">
    <interactant intactId="EBI-18938272">
        <id>Q96KR6</id>
    </interactant>
    <interactant intactId="EBI-355727">
        <id>P02786</id>
        <label>TFRC</label>
    </interactant>
    <organismsDiffer>false</organismsDiffer>
    <experiments>3</experiments>
</comment>
<comment type="interaction">
    <interactant intactId="EBI-18938272">
        <id>Q96KR6</id>
    </interactant>
    <interactant intactId="EBI-1047996">
        <id>O14925</id>
        <label>TIMM23</label>
    </interactant>
    <organismsDiffer>false</organismsDiffer>
    <experiments>3</experiments>
</comment>
<comment type="interaction">
    <interactant intactId="EBI-18938272">
        <id>Q96KR6</id>
    </interactant>
    <interactant intactId="EBI-6268651">
        <id>Q9NPL8</id>
        <label>TIMMDC1</label>
    </interactant>
    <organismsDiffer>false</organismsDiffer>
    <experiments>3</experiments>
</comment>
<comment type="interaction">
    <interactant intactId="EBI-18938272">
        <id>Q96KR6</id>
    </interactant>
    <interactant intactId="EBI-12845616">
        <id>Q6UX40</id>
        <label>TMEM107</label>
    </interactant>
    <organismsDiffer>false</organismsDiffer>
    <experiments>3</experiments>
</comment>
<comment type="interaction">
    <interactant intactId="EBI-18938272">
        <id>Q96KR6</id>
    </interactant>
    <interactant intactId="EBI-723946">
        <id>P17152</id>
        <label>TMEM11</label>
    </interactant>
    <organismsDiffer>false</organismsDiffer>
    <experiments>3</experiments>
</comment>
<comment type="interaction">
    <interactant intactId="EBI-18938272">
        <id>Q96KR6</id>
    </interactant>
    <interactant intactId="EBI-2844246">
        <id>Q9NV12</id>
        <label>TMEM140</label>
    </interactant>
    <organismsDiffer>false</organismsDiffer>
    <experiments>3</experiments>
</comment>
<comment type="interaction">
    <interactant intactId="EBI-18938272">
        <id>Q96KR6</id>
    </interactant>
    <interactant intactId="EBI-13046724">
        <id>Q14656</id>
        <label>TMEM187</label>
    </interactant>
    <organismsDiffer>false</organismsDiffer>
    <experiments>3</experiments>
</comment>
<comment type="interaction">
    <interactant intactId="EBI-18938272">
        <id>Q96KR6</id>
    </interactant>
    <interactant intactId="EBI-741829">
        <id>Q96HH6</id>
        <label>TMEM19</label>
    </interactant>
    <organismsDiffer>false</organismsDiffer>
    <experiments>3</experiments>
</comment>
<comment type="interaction">
    <interactant intactId="EBI-18938272">
        <id>Q96KR6</id>
    </interactant>
    <interactant intactId="EBI-988826">
        <id>Q9Y385</id>
        <label>UBE2J1</label>
    </interactant>
    <organismsDiffer>false</organismsDiffer>
    <experiments>3</experiments>
</comment>
<comment type="interaction">
    <interactant intactId="EBI-18938272">
        <id>Q96KR6</id>
    </interactant>
    <interactant intactId="EBI-12097582">
        <id>P23763-3</id>
        <label>VAMP1</label>
    </interactant>
    <organismsDiffer>false</organismsDiffer>
    <experiments>3</experiments>
</comment>
<comment type="interaction">
    <interactant intactId="EBI-18938272">
        <id>Q96KR6</id>
    </interactant>
    <interactant intactId="EBI-722343">
        <id>Q15836</id>
        <label>VAMP3</label>
    </interactant>
    <organismsDiffer>false</organismsDiffer>
    <experiments>3</experiments>
</comment>
<comment type="interaction">
    <interactant intactId="EBI-18938272">
        <id>Q96KR6</id>
    </interactant>
    <interactant intactId="EBI-744953">
        <id>O75379</id>
        <label>VAMP4</label>
    </interactant>
    <organismsDiffer>false</organismsDiffer>
    <experiments>3</experiments>
</comment>
<comment type="interaction">
    <interactant intactId="EBI-18938272">
        <id>Q96KR6</id>
    </interactant>
    <interactant intactId="EBI-6256462">
        <id>Q9BQB6</id>
        <label>VKORC1</label>
    </interactant>
    <organismsDiffer>false</organismsDiffer>
    <experiments>3</experiments>
</comment>
<comment type="interaction">
    <interactant intactId="EBI-18938272">
        <id>Q96KR6</id>
    </interactant>
    <interactant intactId="EBI-2799703">
        <id>O95070</id>
        <label>YIF1A</label>
    </interactant>
    <organismsDiffer>false</organismsDiffer>
    <experiments>3</experiments>
</comment>
<comment type="interaction">
    <interactant intactId="EBI-18938272">
        <id>Q96KR6</id>
    </interactant>
    <interactant intactId="EBI-2849773">
        <id>Q8IVQ6</id>
        <label>ZDHHC21</label>
    </interactant>
    <organismsDiffer>false</organismsDiffer>
    <experiments>3</experiments>
</comment>
<comment type="subcellular location">
    <subcellularLocation>
        <location evidence="3">Mitochondrion</location>
    </subcellularLocation>
    <subcellularLocation>
        <location evidence="4">Mitochondrion outer membrane</location>
        <topology evidence="5">Multi-pass membrane protein</topology>
    </subcellularLocation>
</comment>
<comment type="tissue specificity">
    <text evidence="3 4">Expressed in late erythroblast differentiation stages (PubMed:26968549). Underexpressed in ovarian cancer epithelia cells compared with normal human ovarian surface epithelia (PubMed:28594398).</text>
</comment>
<comment type="induction">
    <text evidence="3">Up-regulated by the erythroid transcription factor GATA1 (PubMed:26968549).</text>
</comment>
<comment type="similarity">
    <text evidence="5">Belongs to the FAM210 family.</text>
</comment>
<reference key="1">
    <citation type="submission" date="2001-05" db="EMBL/GenBank/DDBJ databases">
        <title>Mapping and characterization of novel human cDNA based on EST A009R26.</title>
        <authorList>
            <person name="Kussmann S."/>
            <person name="Worch S."/>
            <person name="Hansmann I."/>
            <person name="Schlote D."/>
        </authorList>
    </citation>
    <scope>NUCLEOTIDE SEQUENCE [MRNA]</scope>
</reference>
<reference key="2">
    <citation type="journal article" date="2004" name="Nat. Genet.">
        <title>Complete sequencing and characterization of 21,243 full-length human cDNAs.</title>
        <authorList>
            <person name="Ota T."/>
            <person name="Suzuki Y."/>
            <person name="Nishikawa T."/>
            <person name="Otsuki T."/>
            <person name="Sugiyama T."/>
            <person name="Irie R."/>
            <person name="Wakamatsu A."/>
            <person name="Hayashi K."/>
            <person name="Sato H."/>
            <person name="Nagai K."/>
            <person name="Kimura K."/>
            <person name="Makita H."/>
            <person name="Sekine M."/>
            <person name="Obayashi M."/>
            <person name="Nishi T."/>
            <person name="Shibahara T."/>
            <person name="Tanaka T."/>
            <person name="Ishii S."/>
            <person name="Yamamoto J."/>
            <person name="Saito K."/>
            <person name="Kawai Y."/>
            <person name="Isono Y."/>
            <person name="Nakamura Y."/>
            <person name="Nagahari K."/>
            <person name="Murakami K."/>
            <person name="Yasuda T."/>
            <person name="Iwayanagi T."/>
            <person name="Wagatsuma M."/>
            <person name="Shiratori A."/>
            <person name="Sudo H."/>
            <person name="Hosoiri T."/>
            <person name="Kaku Y."/>
            <person name="Kodaira H."/>
            <person name="Kondo H."/>
            <person name="Sugawara M."/>
            <person name="Takahashi M."/>
            <person name="Kanda K."/>
            <person name="Yokoi T."/>
            <person name="Furuya T."/>
            <person name="Kikkawa E."/>
            <person name="Omura Y."/>
            <person name="Abe K."/>
            <person name="Kamihara K."/>
            <person name="Katsuta N."/>
            <person name="Sato K."/>
            <person name="Tanikawa M."/>
            <person name="Yamazaki M."/>
            <person name="Ninomiya K."/>
            <person name="Ishibashi T."/>
            <person name="Yamashita H."/>
            <person name="Murakawa K."/>
            <person name="Fujimori K."/>
            <person name="Tanai H."/>
            <person name="Kimata M."/>
            <person name="Watanabe M."/>
            <person name="Hiraoka S."/>
            <person name="Chiba Y."/>
            <person name="Ishida S."/>
            <person name="Ono Y."/>
            <person name="Takiguchi S."/>
            <person name="Watanabe S."/>
            <person name="Yosida M."/>
            <person name="Hotuta T."/>
            <person name="Kusano J."/>
            <person name="Kanehori K."/>
            <person name="Takahashi-Fujii A."/>
            <person name="Hara H."/>
            <person name="Tanase T.-O."/>
            <person name="Nomura Y."/>
            <person name="Togiya S."/>
            <person name="Komai F."/>
            <person name="Hara R."/>
            <person name="Takeuchi K."/>
            <person name="Arita M."/>
            <person name="Imose N."/>
            <person name="Musashino K."/>
            <person name="Yuuki H."/>
            <person name="Oshima A."/>
            <person name="Sasaki N."/>
            <person name="Aotsuka S."/>
            <person name="Yoshikawa Y."/>
            <person name="Matsunawa H."/>
            <person name="Ichihara T."/>
            <person name="Shiohata N."/>
            <person name="Sano S."/>
            <person name="Moriya S."/>
            <person name="Momiyama H."/>
            <person name="Satoh N."/>
            <person name="Takami S."/>
            <person name="Terashima Y."/>
            <person name="Suzuki O."/>
            <person name="Nakagawa S."/>
            <person name="Senoh A."/>
            <person name="Mizoguchi H."/>
            <person name="Goto Y."/>
            <person name="Shimizu F."/>
            <person name="Wakebe H."/>
            <person name="Hishigaki H."/>
            <person name="Watanabe T."/>
            <person name="Sugiyama A."/>
            <person name="Takemoto M."/>
            <person name="Kawakami B."/>
            <person name="Yamazaki M."/>
            <person name="Watanabe K."/>
            <person name="Kumagai A."/>
            <person name="Itakura S."/>
            <person name="Fukuzumi Y."/>
            <person name="Fujimori Y."/>
            <person name="Komiyama M."/>
            <person name="Tashiro H."/>
            <person name="Tanigami A."/>
            <person name="Fujiwara T."/>
            <person name="Ono T."/>
            <person name="Yamada K."/>
            <person name="Fujii Y."/>
            <person name="Ozaki K."/>
            <person name="Hirao M."/>
            <person name="Ohmori Y."/>
            <person name="Kawabata A."/>
            <person name="Hikiji T."/>
            <person name="Kobatake N."/>
            <person name="Inagaki H."/>
            <person name="Ikema Y."/>
            <person name="Okamoto S."/>
            <person name="Okitani R."/>
            <person name="Kawakami T."/>
            <person name="Noguchi S."/>
            <person name="Itoh T."/>
            <person name="Shigeta K."/>
            <person name="Senba T."/>
            <person name="Matsumura K."/>
            <person name="Nakajima Y."/>
            <person name="Mizuno T."/>
            <person name="Morinaga M."/>
            <person name="Sasaki M."/>
            <person name="Togashi T."/>
            <person name="Oyama M."/>
            <person name="Hata H."/>
            <person name="Watanabe M."/>
            <person name="Komatsu T."/>
            <person name="Mizushima-Sugano J."/>
            <person name="Satoh T."/>
            <person name="Shirai Y."/>
            <person name="Takahashi Y."/>
            <person name="Nakagawa K."/>
            <person name="Okumura K."/>
            <person name="Nagase T."/>
            <person name="Nomura N."/>
            <person name="Kikuchi H."/>
            <person name="Masuho Y."/>
            <person name="Yamashita R."/>
            <person name="Nakai K."/>
            <person name="Yada T."/>
            <person name="Nakamura Y."/>
            <person name="Ohara O."/>
            <person name="Isogai T."/>
            <person name="Sugano S."/>
        </authorList>
    </citation>
    <scope>NUCLEOTIDE SEQUENCE [LARGE SCALE MRNA]</scope>
    <source>
        <tissue>Mammary gland</tissue>
    </source>
</reference>
<reference key="3">
    <citation type="journal article" date="2005" name="DNA Res.">
        <title>Signal sequence and keyword trap in silico for selection of full-length human cDNAs encoding secretion or membrane proteins from oligo-capped cDNA libraries.</title>
        <authorList>
            <person name="Otsuki T."/>
            <person name="Ota T."/>
            <person name="Nishikawa T."/>
            <person name="Hayashi K."/>
            <person name="Suzuki Y."/>
            <person name="Yamamoto J."/>
            <person name="Wakamatsu A."/>
            <person name="Kimura K."/>
            <person name="Sakamoto K."/>
            <person name="Hatano N."/>
            <person name="Kawai Y."/>
            <person name="Ishii S."/>
            <person name="Saito K."/>
            <person name="Kojima S."/>
            <person name="Sugiyama T."/>
            <person name="Ono T."/>
            <person name="Okano K."/>
            <person name="Yoshikawa Y."/>
            <person name="Aotsuka S."/>
            <person name="Sasaki N."/>
            <person name="Hattori A."/>
            <person name="Okumura K."/>
            <person name="Nagai K."/>
            <person name="Sugano S."/>
            <person name="Isogai T."/>
        </authorList>
    </citation>
    <scope>NUCLEOTIDE SEQUENCE [LARGE SCALE MRNA]</scope>
    <source>
        <tissue>Teratocarcinoma</tissue>
    </source>
</reference>
<reference key="4">
    <citation type="journal article" date="2001" name="Nature">
        <title>The DNA sequence and comparative analysis of human chromosome 20.</title>
        <authorList>
            <person name="Deloukas P."/>
            <person name="Matthews L.H."/>
            <person name="Ashurst J.L."/>
            <person name="Burton J."/>
            <person name="Gilbert J.G.R."/>
            <person name="Jones M."/>
            <person name="Stavrides G."/>
            <person name="Almeida J.P."/>
            <person name="Babbage A.K."/>
            <person name="Bagguley C.L."/>
            <person name="Bailey J."/>
            <person name="Barlow K.F."/>
            <person name="Bates K.N."/>
            <person name="Beard L.M."/>
            <person name="Beare D.M."/>
            <person name="Beasley O.P."/>
            <person name="Bird C.P."/>
            <person name="Blakey S.E."/>
            <person name="Bridgeman A.M."/>
            <person name="Brown A.J."/>
            <person name="Buck D."/>
            <person name="Burrill W.D."/>
            <person name="Butler A.P."/>
            <person name="Carder C."/>
            <person name="Carter N.P."/>
            <person name="Chapman J.C."/>
            <person name="Clamp M."/>
            <person name="Clark G."/>
            <person name="Clark L.N."/>
            <person name="Clark S.Y."/>
            <person name="Clee C.M."/>
            <person name="Clegg S."/>
            <person name="Cobley V.E."/>
            <person name="Collier R.E."/>
            <person name="Connor R.E."/>
            <person name="Corby N.R."/>
            <person name="Coulson A."/>
            <person name="Coville G.J."/>
            <person name="Deadman R."/>
            <person name="Dhami P.D."/>
            <person name="Dunn M."/>
            <person name="Ellington A.G."/>
            <person name="Frankland J.A."/>
            <person name="Fraser A."/>
            <person name="French L."/>
            <person name="Garner P."/>
            <person name="Grafham D.V."/>
            <person name="Griffiths C."/>
            <person name="Griffiths M.N.D."/>
            <person name="Gwilliam R."/>
            <person name="Hall R.E."/>
            <person name="Hammond S."/>
            <person name="Harley J.L."/>
            <person name="Heath P.D."/>
            <person name="Ho S."/>
            <person name="Holden J.L."/>
            <person name="Howden P.J."/>
            <person name="Huckle E."/>
            <person name="Hunt A.R."/>
            <person name="Hunt S.E."/>
            <person name="Jekosch K."/>
            <person name="Johnson C.M."/>
            <person name="Johnson D."/>
            <person name="Kay M.P."/>
            <person name="Kimberley A.M."/>
            <person name="King A."/>
            <person name="Knights A."/>
            <person name="Laird G.K."/>
            <person name="Lawlor S."/>
            <person name="Lehvaeslaiho M.H."/>
            <person name="Leversha M.A."/>
            <person name="Lloyd C."/>
            <person name="Lloyd D.M."/>
            <person name="Lovell J.D."/>
            <person name="Marsh V.L."/>
            <person name="Martin S.L."/>
            <person name="McConnachie L.J."/>
            <person name="McLay K."/>
            <person name="McMurray A.A."/>
            <person name="Milne S.A."/>
            <person name="Mistry D."/>
            <person name="Moore M.J.F."/>
            <person name="Mullikin J.C."/>
            <person name="Nickerson T."/>
            <person name="Oliver K."/>
            <person name="Parker A."/>
            <person name="Patel R."/>
            <person name="Pearce T.A.V."/>
            <person name="Peck A.I."/>
            <person name="Phillimore B.J.C.T."/>
            <person name="Prathalingam S.R."/>
            <person name="Plumb R.W."/>
            <person name="Ramsay H."/>
            <person name="Rice C.M."/>
            <person name="Ross M.T."/>
            <person name="Scott C.E."/>
            <person name="Sehra H.K."/>
            <person name="Shownkeen R."/>
            <person name="Sims S."/>
            <person name="Skuce C.D."/>
            <person name="Smith M.L."/>
            <person name="Soderlund C."/>
            <person name="Steward C.A."/>
            <person name="Sulston J.E."/>
            <person name="Swann R.M."/>
            <person name="Sycamore N."/>
            <person name="Taylor R."/>
            <person name="Tee L."/>
            <person name="Thomas D.W."/>
            <person name="Thorpe A."/>
            <person name="Tracey A."/>
            <person name="Tromans A.C."/>
            <person name="Vaudin M."/>
            <person name="Wall M."/>
            <person name="Wallis J.M."/>
            <person name="Whitehead S.L."/>
            <person name="Whittaker P."/>
            <person name="Willey D.L."/>
            <person name="Williams L."/>
            <person name="Williams S.A."/>
            <person name="Wilming L."/>
            <person name="Wray P.W."/>
            <person name="Hubbard T."/>
            <person name="Durbin R.M."/>
            <person name="Bentley D.R."/>
            <person name="Beck S."/>
            <person name="Rogers J."/>
        </authorList>
    </citation>
    <scope>NUCLEOTIDE SEQUENCE [LARGE SCALE GENOMIC DNA]</scope>
</reference>
<reference key="5">
    <citation type="submission" date="2005-09" db="EMBL/GenBank/DDBJ databases">
        <authorList>
            <person name="Mural R.J."/>
            <person name="Istrail S."/>
            <person name="Sutton G.G."/>
            <person name="Florea L."/>
            <person name="Halpern A.L."/>
            <person name="Mobarry C.M."/>
            <person name="Lippert R."/>
            <person name="Walenz B."/>
            <person name="Shatkay H."/>
            <person name="Dew I."/>
            <person name="Miller J.R."/>
            <person name="Flanigan M.J."/>
            <person name="Edwards N.J."/>
            <person name="Bolanos R."/>
            <person name="Fasulo D."/>
            <person name="Halldorsson B.V."/>
            <person name="Hannenhalli S."/>
            <person name="Turner R."/>
            <person name="Yooseph S."/>
            <person name="Lu F."/>
            <person name="Nusskern D.R."/>
            <person name="Shue B.C."/>
            <person name="Zheng X.H."/>
            <person name="Zhong F."/>
            <person name="Delcher A.L."/>
            <person name="Huson D.H."/>
            <person name="Kravitz S.A."/>
            <person name="Mouchard L."/>
            <person name="Reinert K."/>
            <person name="Remington K.A."/>
            <person name="Clark A.G."/>
            <person name="Waterman M.S."/>
            <person name="Eichler E.E."/>
            <person name="Adams M.D."/>
            <person name="Hunkapiller M.W."/>
            <person name="Myers E.W."/>
            <person name="Venter J.C."/>
        </authorList>
    </citation>
    <scope>NUCLEOTIDE SEQUENCE [LARGE SCALE GENOMIC DNA]</scope>
</reference>
<reference key="6">
    <citation type="journal article" date="2004" name="Genome Res.">
        <title>The status, quality, and expansion of the NIH full-length cDNA project: the Mammalian Gene Collection (MGC).</title>
        <authorList>
            <consortium name="The MGC Project Team"/>
        </authorList>
    </citation>
    <scope>NUCLEOTIDE SEQUENCE [LARGE SCALE MRNA]</scope>
    <source>
        <tissue>Lung</tissue>
    </source>
</reference>
<reference key="7">
    <citation type="journal article" date="2014" name="J. Proteomics">
        <title>An enzyme assisted RP-RPLC approach for in-depth analysis of human liver phosphoproteome.</title>
        <authorList>
            <person name="Bian Y."/>
            <person name="Song C."/>
            <person name="Cheng K."/>
            <person name="Dong M."/>
            <person name="Wang F."/>
            <person name="Huang J."/>
            <person name="Sun D."/>
            <person name="Wang L."/>
            <person name="Ye M."/>
            <person name="Zou H."/>
        </authorList>
    </citation>
    <scope>IDENTIFICATION BY MASS SPECTROMETRY [LARGE SCALE ANALYSIS]</scope>
    <source>
        <tissue>Liver</tissue>
    </source>
</reference>
<reference key="8">
    <citation type="journal article" date="2016" name="Int. J. Hematol.">
        <title>Identification of a novel putative mitochondrial protein FAM210B associated with erythroid differentiation.</title>
        <authorList>
            <person name="Kondo A."/>
            <person name="Fujiwara T."/>
            <person name="Okitsu Y."/>
            <person name="Fukuhara N."/>
            <person name="Onishi Y."/>
            <person name="Nakamura Y."/>
            <person name="Sawada K."/>
            <person name="Harigae H."/>
        </authorList>
    </citation>
    <scope>FUNCTION</scope>
    <scope>SUBCELLULAR LOCATION</scope>
    <scope>TISSUE SPECIFICITY</scope>
    <scope>INDUCTION</scope>
</reference>
<reference key="9">
    <citation type="journal article" date="2017" name="Cell Death Dis.">
        <title>Loss of the novel mitochondrial protein FAM210B promotes metastasis via PDK4-dependent metabolic reprogramming.</title>
        <authorList>
            <person name="Sun S."/>
            <person name="Liu J."/>
            <person name="Zhao M."/>
            <person name="Han Y."/>
            <person name="Chen P."/>
            <person name="Mo Q."/>
            <person name="Wang B."/>
            <person name="Chen G."/>
            <person name="Fang Y."/>
            <person name="Tian Y."/>
            <person name="Zhou J."/>
            <person name="Ma D."/>
            <person name="Gao Q."/>
            <person name="Wu P."/>
        </authorList>
    </citation>
    <scope>FUNCTION</scope>
    <scope>SUBCELLULAR LOCATION</scope>
    <scope>TRANSIT PEPTIDE CLEAVAGE SITE</scope>
    <scope>TISSUE SPECIFICITY</scope>
</reference>
<dbReference type="EMBL" id="AJ311123">
    <property type="protein sequence ID" value="CAC67490.1"/>
    <property type="molecule type" value="mRNA"/>
</dbReference>
<dbReference type="EMBL" id="AK075565">
    <property type="protein sequence ID" value="BAC11704.1"/>
    <property type="molecule type" value="mRNA"/>
</dbReference>
<dbReference type="EMBL" id="AK314768">
    <property type="protein sequence ID" value="BAG37306.1"/>
    <property type="molecule type" value="mRNA"/>
</dbReference>
<dbReference type="EMBL" id="AL121914">
    <property type="status" value="NOT_ANNOTATED_CDS"/>
    <property type="molecule type" value="Genomic_DNA"/>
</dbReference>
<dbReference type="EMBL" id="CH471077">
    <property type="protein sequence ID" value="EAW75564.1"/>
    <property type="molecule type" value="Genomic_DNA"/>
</dbReference>
<dbReference type="EMBL" id="CH471077">
    <property type="protein sequence ID" value="EAW75565.1"/>
    <property type="molecule type" value="Genomic_DNA"/>
</dbReference>
<dbReference type="EMBL" id="BC017725">
    <property type="protein sequence ID" value="AAH17725.1"/>
    <property type="molecule type" value="mRNA"/>
</dbReference>
<dbReference type="CCDS" id="CCDS13450.1"/>
<dbReference type="RefSeq" id="NP_543011.2">
    <property type="nucleotide sequence ID" value="NM_080821.3"/>
</dbReference>
<dbReference type="BioGRID" id="125482">
    <property type="interactions" value="98"/>
</dbReference>
<dbReference type="FunCoup" id="Q96KR6">
    <property type="interactions" value="555"/>
</dbReference>
<dbReference type="IntAct" id="Q96KR6">
    <property type="interactions" value="91"/>
</dbReference>
<dbReference type="MINT" id="Q96KR6"/>
<dbReference type="STRING" id="9606.ENSP00000360437"/>
<dbReference type="iPTMnet" id="Q96KR6"/>
<dbReference type="PhosphoSitePlus" id="Q96KR6"/>
<dbReference type="BioMuta" id="FAM210B"/>
<dbReference type="DMDM" id="41688811"/>
<dbReference type="jPOST" id="Q96KR6"/>
<dbReference type="MassIVE" id="Q96KR6"/>
<dbReference type="PaxDb" id="9606-ENSP00000360437"/>
<dbReference type="PeptideAtlas" id="Q96KR6"/>
<dbReference type="ProteomicsDB" id="77108"/>
<dbReference type="Pumba" id="Q96KR6"/>
<dbReference type="TopDownProteomics" id="Q96KR6"/>
<dbReference type="Antibodypedia" id="63338">
    <property type="antibodies" value="22 antibodies from 9 providers"/>
</dbReference>
<dbReference type="DNASU" id="116151"/>
<dbReference type="Ensembl" id="ENST00000371384.4">
    <property type="protein sequence ID" value="ENSP00000360437.3"/>
    <property type="gene ID" value="ENSG00000124098.10"/>
</dbReference>
<dbReference type="GeneID" id="116151"/>
<dbReference type="KEGG" id="hsa:116151"/>
<dbReference type="MANE-Select" id="ENST00000371384.4">
    <property type="protein sequence ID" value="ENSP00000360437.3"/>
    <property type="RefSeq nucleotide sequence ID" value="NM_080821.3"/>
    <property type="RefSeq protein sequence ID" value="NP_543011.2"/>
</dbReference>
<dbReference type="UCSC" id="uc002xxc.4">
    <property type="organism name" value="human"/>
</dbReference>
<dbReference type="AGR" id="HGNC:16102"/>
<dbReference type="CTD" id="116151"/>
<dbReference type="DisGeNET" id="116151"/>
<dbReference type="GeneCards" id="FAM210B"/>
<dbReference type="HGNC" id="HGNC:16102">
    <property type="gene designation" value="FAM210B"/>
</dbReference>
<dbReference type="HPA" id="ENSG00000124098">
    <property type="expression patterns" value="Low tissue specificity"/>
</dbReference>
<dbReference type="MIM" id="618722">
    <property type="type" value="gene"/>
</dbReference>
<dbReference type="neXtProt" id="NX_Q96KR6"/>
<dbReference type="OpenTargets" id="ENSG00000124098"/>
<dbReference type="PharmGKB" id="PA25647"/>
<dbReference type="VEuPathDB" id="HostDB:ENSG00000124098"/>
<dbReference type="eggNOG" id="KOG4526">
    <property type="taxonomic scope" value="Eukaryota"/>
</dbReference>
<dbReference type="GeneTree" id="ENSGT00940000156134"/>
<dbReference type="HOGENOM" id="CLU_1414738_0_0_1"/>
<dbReference type="InParanoid" id="Q96KR6"/>
<dbReference type="OMA" id="CRGHQDP"/>
<dbReference type="OrthoDB" id="426386at2759"/>
<dbReference type="PAN-GO" id="Q96KR6">
    <property type="GO annotations" value="1 GO annotation based on evolutionary models"/>
</dbReference>
<dbReference type="PhylomeDB" id="Q96KR6"/>
<dbReference type="TreeFam" id="TF313283"/>
<dbReference type="PathwayCommons" id="Q96KR6"/>
<dbReference type="SignaLink" id="Q96KR6"/>
<dbReference type="BioGRID-ORCS" id="116151">
    <property type="hits" value="6 hits in 1118 CRISPR screens"/>
</dbReference>
<dbReference type="ChiTaRS" id="FAM210B">
    <property type="organism name" value="human"/>
</dbReference>
<dbReference type="GenomeRNAi" id="116151"/>
<dbReference type="Pharos" id="Q96KR6">
    <property type="development level" value="Tbio"/>
</dbReference>
<dbReference type="PRO" id="PR:Q96KR6"/>
<dbReference type="Proteomes" id="UP000005640">
    <property type="component" value="Chromosome 20"/>
</dbReference>
<dbReference type="RNAct" id="Q96KR6">
    <property type="molecule type" value="protein"/>
</dbReference>
<dbReference type="Bgee" id="ENSG00000124098">
    <property type="expression patterns" value="Expressed in parotid gland and 187 other cell types or tissues"/>
</dbReference>
<dbReference type="ExpressionAtlas" id="Q96KR6">
    <property type="expression patterns" value="baseline and differential"/>
</dbReference>
<dbReference type="GO" id="GO:0016020">
    <property type="term" value="C:membrane"/>
    <property type="evidence" value="ECO:0000314"/>
    <property type="project" value="UniProtKB"/>
</dbReference>
<dbReference type="GO" id="GO:0005741">
    <property type="term" value="C:mitochondrial outer membrane"/>
    <property type="evidence" value="ECO:0000314"/>
    <property type="project" value="UniProtKB"/>
</dbReference>
<dbReference type="GO" id="GO:0005739">
    <property type="term" value="C:mitochondrion"/>
    <property type="evidence" value="ECO:0006056"/>
    <property type="project" value="FlyBase"/>
</dbReference>
<dbReference type="GO" id="GO:0071392">
    <property type="term" value="P:cellular response to estradiol stimulus"/>
    <property type="evidence" value="ECO:0000314"/>
    <property type="project" value="UniProtKB"/>
</dbReference>
<dbReference type="GO" id="GO:0043249">
    <property type="term" value="P:erythrocyte maturation"/>
    <property type="evidence" value="ECO:0007669"/>
    <property type="project" value="UniProtKB-KW"/>
</dbReference>
<dbReference type="GO" id="GO:0006954">
    <property type="term" value="P:inflammatory response"/>
    <property type="evidence" value="ECO:0007669"/>
    <property type="project" value="Ensembl"/>
</dbReference>
<dbReference type="GO" id="GO:0045648">
    <property type="term" value="P:positive regulation of erythrocyte differentiation"/>
    <property type="evidence" value="ECO:0000315"/>
    <property type="project" value="UniProtKB"/>
</dbReference>
<dbReference type="GO" id="GO:0072593">
    <property type="term" value="P:reactive oxygen species metabolic process"/>
    <property type="evidence" value="ECO:0007669"/>
    <property type="project" value="Ensembl"/>
</dbReference>
<dbReference type="GO" id="GO:0043588">
    <property type="term" value="P:skin development"/>
    <property type="evidence" value="ECO:0007669"/>
    <property type="project" value="Ensembl"/>
</dbReference>
<dbReference type="GO" id="GO:0048536">
    <property type="term" value="P:spleen development"/>
    <property type="evidence" value="ECO:0007669"/>
    <property type="project" value="Ensembl"/>
</dbReference>
<dbReference type="InterPro" id="IPR045866">
    <property type="entry name" value="FAM210A/B-like"/>
</dbReference>
<dbReference type="InterPro" id="IPR009688">
    <property type="entry name" value="FAM210A/B-like_dom"/>
</dbReference>
<dbReference type="PANTHER" id="PTHR21377">
    <property type="entry name" value="PROTEIN FAM210B, MITOCHONDRIAL"/>
    <property type="match status" value="1"/>
</dbReference>
<dbReference type="PANTHER" id="PTHR21377:SF16">
    <property type="entry name" value="PROTEIN FAM210B, MITOCHONDRIAL"/>
    <property type="match status" value="1"/>
</dbReference>
<dbReference type="Pfam" id="PF06916">
    <property type="entry name" value="FAM210A-B_dom"/>
    <property type="match status" value="1"/>
</dbReference>
<protein>
    <recommendedName>
        <fullName evidence="5">Protein FAM210B, mitochondrial</fullName>
    </recommendedName>
</protein>
<sequence length="192" mass="20424">MAGLLALLGPAGRVGARVRPRATWLLGATAPCAPPPLALALLPPRLDARLLRTARGDCRGHQDPSQATGTTGSSVSCTEEKKQSKSQQLKKIFQEYGTVGVSLHIGISLISLGIFYMVVSSGVDMPAILLKLGFKESLVQSKMAAGTSTFVVAYAIHKLFAPVRISITLVSVPLIVRYFRKVGFFKPPAAKP</sequence>
<feature type="transit peptide" description="Mitochondrion" evidence="1 4">
    <location>
        <begin position="1"/>
        <end position="58"/>
    </location>
</feature>
<feature type="chain" id="PRO_0000079451" description="Protein FAM210B, mitochondrial">
    <location>
        <begin position="59"/>
        <end position="192"/>
    </location>
</feature>
<feature type="transmembrane region" description="Helical" evidence="1">
    <location>
        <begin position="99"/>
        <end position="119"/>
    </location>
</feature>
<feature type="transmembrane region" description="Helical" evidence="1">
    <location>
        <begin position="150"/>
        <end position="170"/>
    </location>
</feature>
<feature type="domain" description="DUF1279">
    <location>
        <begin position="80"/>
        <end position="191"/>
    </location>
</feature>
<feature type="region of interest" description="Disordered" evidence="2">
    <location>
        <begin position="57"/>
        <end position="80"/>
    </location>
</feature>
<feature type="compositionally biased region" description="Polar residues" evidence="2">
    <location>
        <begin position="63"/>
        <end position="77"/>
    </location>
</feature>
<feature type="sequence variant" id="VAR_033763" description="In dbSNP:rs6099115.">
    <original>P</original>
    <variation>S</variation>
    <location>
        <position position="126"/>
    </location>
</feature>
<feature type="sequence conflict" description="In Ref. 1; CAC67490." evidence="5" ref="1">
    <original>P</original>
    <variation>L</variation>
    <location>
        <position position="36"/>
    </location>
</feature>
<feature type="sequence conflict" description="In Ref. 6; AAH17725." evidence="5" ref="6">
    <original>A</original>
    <variation>V</variation>
    <location>
        <position position="161"/>
    </location>
</feature>
<gene>
    <name evidence="6" type="primary">FAM210B</name>
    <name type="synonym">C20orf108</name>
    <name type="ORF">PSEC0265</name>
</gene>